<accession>Q9RFV6</accession>
<accession>A7N1U1</accession>
<evidence type="ECO:0000255" key="1">
    <source>
        <dbReference type="HAMAP-Rule" id="MF_00430"/>
    </source>
</evidence>
<evidence type="ECO:0000305" key="2"/>
<protein>
    <recommendedName>
        <fullName evidence="1">Na(+)-translocating NADH-quinone reductase subunit F</fullName>
        <shortName evidence="1">Na(+)-NQR subunit F</shortName>
        <shortName evidence="1">Na(+)-translocating NQR subunit F</shortName>
        <ecNumber evidence="1">7.2.1.1</ecNumber>
    </recommendedName>
    <alternativeName>
        <fullName evidence="1">NQR complex subunit F</fullName>
    </alternativeName>
    <alternativeName>
        <fullName evidence="1">NQR-1 subunit F</fullName>
    </alternativeName>
</protein>
<sequence length="407" mass="45087">MDIILGVVMFTLIVLALVLVILFAKSKLVPTGDITISVNDDPSLAIVTQPGGKLLSALAGAGVFVSSACGGGGSCGQCRVKVKSGGGDILPTELDHITKGEAREGERLACQVAMKTDMDIELPEEIFGVKKWECTVISNDNKATFIKELKLQIPDGESVPFRAGGYIQIEAPAHHVKYADYDIPEEYREDWEKFNLFRYESKVNEETIRAYSMANYPEEHGIIMLNVRIATPPPNNPDVAPGIMSSFIWSLKEGDKCTISGPFGEFFAKDTDAEMVFVGGGAGMAPMRSHIFDQLKRLHSKRKMSFWYGARSKREMFYVEDFDGLAADNDNFVWHCALSDPLPEDNWDGYTGFIHNVLYENYLRDHEAPEDCEYYMCGPPMMNAAVIGMLKDLGVEDENILLDDFGG</sequence>
<dbReference type="EC" id="7.2.1.1" evidence="1"/>
<dbReference type="EMBL" id="AF165980">
    <property type="protein sequence ID" value="AAF15416.1"/>
    <property type="molecule type" value="Genomic_DNA"/>
</dbReference>
<dbReference type="EMBL" id="CP000789">
    <property type="protein sequence ID" value="ABU72218.1"/>
    <property type="molecule type" value="Genomic_DNA"/>
</dbReference>
<dbReference type="RefSeq" id="WP_005427299.1">
    <property type="nucleotide sequence ID" value="NC_022269.1"/>
</dbReference>
<dbReference type="SMR" id="Q9RFV6"/>
<dbReference type="KEGG" id="vha:VIBHAR_03270"/>
<dbReference type="PATRIC" id="fig|338187.25.peg.2922"/>
<dbReference type="Proteomes" id="UP000008152">
    <property type="component" value="Chromosome I"/>
</dbReference>
<dbReference type="GO" id="GO:0005886">
    <property type="term" value="C:plasma membrane"/>
    <property type="evidence" value="ECO:0007669"/>
    <property type="project" value="UniProtKB-SubCell"/>
</dbReference>
<dbReference type="GO" id="GO:0051537">
    <property type="term" value="F:2 iron, 2 sulfur cluster binding"/>
    <property type="evidence" value="ECO:0007669"/>
    <property type="project" value="UniProtKB-KW"/>
</dbReference>
<dbReference type="GO" id="GO:0009055">
    <property type="term" value="F:electron transfer activity"/>
    <property type="evidence" value="ECO:0007669"/>
    <property type="project" value="UniProtKB-UniRule"/>
</dbReference>
<dbReference type="GO" id="GO:0046872">
    <property type="term" value="F:metal ion binding"/>
    <property type="evidence" value="ECO:0007669"/>
    <property type="project" value="UniProtKB-KW"/>
</dbReference>
<dbReference type="GO" id="GO:0016655">
    <property type="term" value="F:oxidoreductase activity, acting on NAD(P)H, quinone or similar compound as acceptor"/>
    <property type="evidence" value="ECO:0007669"/>
    <property type="project" value="InterPro"/>
</dbReference>
<dbReference type="GO" id="GO:0006814">
    <property type="term" value="P:sodium ion transport"/>
    <property type="evidence" value="ECO:0007669"/>
    <property type="project" value="UniProtKB-UniRule"/>
</dbReference>
<dbReference type="CDD" id="cd06188">
    <property type="entry name" value="NADH_quinone_reductase"/>
    <property type="match status" value="1"/>
</dbReference>
<dbReference type="FunFam" id="2.40.30.10:FF:000064">
    <property type="entry name" value="Na(+)-translocating NADH-quinone reductase subunit F"/>
    <property type="match status" value="1"/>
</dbReference>
<dbReference type="FunFam" id="3.10.20.30:FF:000024">
    <property type="entry name" value="Na(+)-translocating NADH-quinone reductase subunit F"/>
    <property type="match status" value="1"/>
</dbReference>
<dbReference type="FunFam" id="3.40.50.80:FF:000014">
    <property type="entry name" value="Na(+)-translocating NADH-quinone reductase subunit F"/>
    <property type="match status" value="1"/>
</dbReference>
<dbReference type="Gene3D" id="3.10.20.30">
    <property type="match status" value="1"/>
</dbReference>
<dbReference type="Gene3D" id="3.40.50.80">
    <property type="entry name" value="Nucleotide-binding domain of ferredoxin-NADP reductase (FNR) module"/>
    <property type="match status" value="1"/>
</dbReference>
<dbReference type="Gene3D" id="2.40.30.10">
    <property type="entry name" value="Translation factors"/>
    <property type="match status" value="1"/>
</dbReference>
<dbReference type="HAMAP" id="MF_00430">
    <property type="entry name" value="NqrF"/>
    <property type="match status" value="1"/>
</dbReference>
<dbReference type="InterPro" id="IPR036010">
    <property type="entry name" value="2Fe-2S_ferredoxin-like_sf"/>
</dbReference>
<dbReference type="InterPro" id="IPR001041">
    <property type="entry name" value="2Fe-2S_ferredoxin-type"/>
</dbReference>
<dbReference type="InterPro" id="IPR012675">
    <property type="entry name" value="Beta-grasp_dom_sf"/>
</dbReference>
<dbReference type="InterPro" id="IPR008333">
    <property type="entry name" value="Cbr1-like_FAD-bd_dom"/>
</dbReference>
<dbReference type="InterPro" id="IPR017927">
    <property type="entry name" value="FAD-bd_FR_type"/>
</dbReference>
<dbReference type="InterPro" id="IPR001709">
    <property type="entry name" value="Flavoprot_Pyr_Nucl_cyt_Rdtase"/>
</dbReference>
<dbReference type="InterPro" id="IPR039261">
    <property type="entry name" value="FNR_nucleotide-bd"/>
</dbReference>
<dbReference type="InterPro" id="IPR010205">
    <property type="entry name" value="NqrF"/>
</dbReference>
<dbReference type="InterPro" id="IPR001433">
    <property type="entry name" value="OxRdtase_FAD/NAD-bd"/>
</dbReference>
<dbReference type="InterPro" id="IPR017938">
    <property type="entry name" value="Riboflavin_synthase-like_b-brl"/>
</dbReference>
<dbReference type="NCBIfam" id="TIGR01941">
    <property type="entry name" value="nqrF"/>
    <property type="match status" value="1"/>
</dbReference>
<dbReference type="PANTHER" id="PTHR43644">
    <property type="entry name" value="NA(+)-TRANSLOCATING NADH-QUINONE REDUCTASE SUBUNIT"/>
    <property type="match status" value="1"/>
</dbReference>
<dbReference type="PANTHER" id="PTHR43644:SF1">
    <property type="entry name" value="NAD(P)H-FLAVIN REDUCTASE"/>
    <property type="match status" value="1"/>
</dbReference>
<dbReference type="Pfam" id="PF00970">
    <property type="entry name" value="FAD_binding_6"/>
    <property type="match status" value="1"/>
</dbReference>
<dbReference type="Pfam" id="PF00111">
    <property type="entry name" value="Fer2"/>
    <property type="match status" value="1"/>
</dbReference>
<dbReference type="Pfam" id="PF00175">
    <property type="entry name" value="NAD_binding_1"/>
    <property type="match status" value="1"/>
</dbReference>
<dbReference type="PIRSF" id="PIRSF000044">
    <property type="entry name" value="Cis_Diol_DH_RD"/>
    <property type="match status" value="1"/>
</dbReference>
<dbReference type="PRINTS" id="PR00371">
    <property type="entry name" value="FPNCR"/>
</dbReference>
<dbReference type="SUPFAM" id="SSF54292">
    <property type="entry name" value="2Fe-2S ferredoxin-like"/>
    <property type="match status" value="1"/>
</dbReference>
<dbReference type="SUPFAM" id="SSF52343">
    <property type="entry name" value="Ferredoxin reductase-like, C-terminal NADP-linked domain"/>
    <property type="match status" value="1"/>
</dbReference>
<dbReference type="SUPFAM" id="SSF63380">
    <property type="entry name" value="Riboflavin synthase domain-like"/>
    <property type="match status" value="1"/>
</dbReference>
<dbReference type="PROSITE" id="PS51085">
    <property type="entry name" value="2FE2S_FER_2"/>
    <property type="match status" value="1"/>
</dbReference>
<dbReference type="PROSITE" id="PS51384">
    <property type="entry name" value="FAD_FR"/>
    <property type="match status" value="1"/>
</dbReference>
<name>NQRF_VIBC1</name>
<reference key="1">
    <citation type="journal article" date="1999" name="Biochemistry">
        <title>Sequencing and preliminary characterization of the Na+-translocating NADH:ubiquinone oxidoreductase from Vibrio harveyi.</title>
        <authorList>
            <person name="Zhou W."/>
            <person name="Bertsova Y.V."/>
            <person name="Feng B."/>
            <person name="Tsatsos P."/>
            <person name="Verkhovskaya M.L."/>
            <person name="Gennis R.B."/>
            <person name="Bogachev A.V."/>
            <person name="Barquera B."/>
        </authorList>
    </citation>
    <scope>NUCLEOTIDE SEQUENCE [GENOMIC DNA]</scope>
</reference>
<reference key="2">
    <citation type="submission" date="2007-08" db="EMBL/GenBank/DDBJ databases">
        <authorList>
            <consortium name="The Vibrio harveyi Genome Sequencing Project"/>
            <person name="Bassler B."/>
            <person name="Clifton S.W."/>
            <person name="Fulton L."/>
            <person name="Delehaunty K."/>
            <person name="Fronick C."/>
            <person name="Harrison M."/>
            <person name="Markivic C."/>
            <person name="Fulton R."/>
            <person name="Tin-Wollam A.-M."/>
            <person name="Shah N."/>
            <person name="Pepin K."/>
            <person name="Nash W."/>
            <person name="Thiruvilangam P."/>
            <person name="Bhonagiri V."/>
            <person name="Waters C."/>
            <person name="Tu K.C."/>
            <person name="Irgon J."/>
            <person name="Wilson R.K."/>
        </authorList>
    </citation>
    <scope>NUCLEOTIDE SEQUENCE [LARGE SCALE GENOMIC DNA]</scope>
    <source>
        <strain>ATCC BAA-1116 / BB120</strain>
    </source>
</reference>
<feature type="chain" id="PRO_0000074507" description="Na(+)-translocating NADH-quinone reductase subunit F">
    <location>
        <begin position="1"/>
        <end position="407"/>
    </location>
</feature>
<feature type="transmembrane region" description="Helical" evidence="1">
    <location>
        <begin position="3"/>
        <end position="23"/>
    </location>
</feature>
<feature type="domain" description="2Fe-2S ferredoxin-type" evidence="1">
    <location>
        <begin position="32"/>
        <end position="126"/>
    </location>
</feature>
<feature type="domain" description="FAD-binding FR-type" evidence="1">
    <location>
        <begin position="129"/>
        <end position="269"/>
    </location>
</feature>
<feature type="region of interest" description="Catalytic">
    <location>
        <begin position="272"/>
        <end position="389"/>
    </location>
</feature>
<feature type="binding site" evidence="1">
    <location>
        <position position="69"/>
    </location>
    <ligand>
        <name>[2Fe-2S] cluster</name>
        <dbReference type="ChEBI" id="CHEBI:190135"/>
    </ligand>
</feature>
<feature type="binding site" evidence="1">
    <location>
        <position position="75"/>
    </location>
    <ligand>
        <name>[2Fe-2S] cluster</name>
        <dbReference type="ChEBI" id="CHEBI:190135"/>
    </ligand>
</feature>
<feature type="binding site" evidence="1">
    <location>
        <position position="78"/>
    </location>
    <ligand>
        <name>[2Fe-2S] cluster</name>
        <dbReference type="ChEBI" id="CHEBI:190135"/>
    </ligand>
</feature>
<feature type="binding site" evidence="1">
    <location>
        <position position="110"/>
    </location>
    <ligand>
        <name>[2Fe-2S] cluster</name>
        <dbReference type="ChEBI" id="CHEBI:190135"/>
    </ligand>
</feature>
<feature type="sequence conflict" description="In Ref. 1; AAF15416." evidence="2" ref="1">
    <original>VKV</original>
    <variation>RKI</variation>
    <location>
        <begin position="80"/>
        <end position="82"/>
    </location>
</feature>
<keyword id="KW-0001">2Fe-2S</keyword>
<keyword id="KW-0997">Cell inner membrane</keyword>
<keyword id="KW-1003">Cell membrane</keyword>
<keyword id="KW-0274">FAD</keyword>
<keyword id="KW-0285">Flavoprotein</keyword>
<keyword id="KW-0406">Ion transport</keyword>
<keyword id="KW-0408">Iron</keyword>
<keyword id="KW-0411">Iron-sulfur</keyword>
<keyword id="KW-0472">Membrane</keyword>
<keyword id="KW-0479">Metal-binding</keyword>
<keyword id="KW-0520">NAD</keyword>
<keyword id="KW-0915">Sodium</keyword>
<keyword id="KW-0739">Sodium transport</keyword>
<keyword id="KW-1278">Translocase</keyword>
<keyword id="KW-0812">Transmembrane</keyword>
<keyword id="KW-1133">Transmembrane helix</keyword>
<keyword id="KW-0813">Transport</keyword>
<keyword id="KW-0830">Ubiquinone</keyword>
<proteinExistence type="inferred from homology"/>
<comment type="function">
    <text evidence="1">NQR complex catalyzes the reduction of ubiquinone-1 to ubiquinol by two successive reactions, coupled with the transport of Na(+) ions from the cytoplasm to the periplasm. The first step is catalyzed by NqrF, which accepts electrons from NADH and reduces ubiquinone-1 to ubisemiquinone by a one-electron transfer pathway.</text>
</comment>
<comment type="catalytic activity">
    <reaction evidence="1">
        <text>a ubiquinone + n Na(+)(in) + NADH + H(+) = a ubiquinol + n Na(+)(out) + NAD(+)</text>
        <dbReference type="Rhea" id="RHEA:47748"/>
        <dbReference type="Rhea" id="RHEA-COMP:9565"/>
        <dbReference type="Rhea" id="RHEA-COMP:9566"/>
        <dbReference type="ChEBI" id="CHEBI:15378"/>
        <dbReference type="ChEBI" id="CHEBI:16389"/>
        <dbReference type="ChEBI" id="CHEBI:17976"/>
        <dbReference type="ChEBI" id="CHEBI:29101"/>
        <dbReference type="ChEBI" id="CHEBI:57540"/>
        <dbReference type="ChEBI" id="CHEBI:57945"/>
        <dbReference type="EC" id="7.2.1.1"/>
    </reaction>
</comment>
<comment type="cofactor">
    <cofactor evidence="1">
        <name>[2Fe-2S] cluster</name>
        <dbReference type="ChEBI" id="CHEBI:190135"/>
    </cofactor>
    <text evidence="1">Binds 1 [2Fe-2S] cluster.</text>
</comment>
<comment type="cofactor">
    <cofactor evidence="1">
        <name>FAD</name>
        <dbReference type="ChEBI" id="CHEBI:57692"/>
    </cofactor>
</comment>
<comment type="subunit">
    <text evidence="1">Composed of six subunits; NqrA, NqrB, NqrC, NqrD, NqrE and NqrF.</text>
</comment>
<comment type="subcellular location">
    <subcellularLocation>
        <location evidence="1">Cell inner membrane</location>
        <topology evidence="1">Single-pass membrane protein</topology>
    </subcellularLocation>
</comment>
<comment type="similarity">
    <text evidence="1">Belongs to the NqrF family.</text>
</comment>
<organism>
    <name type="scientific">Vibrio campbellii (strain ATCC BAA-1116)</name>
    <dbReference type="NCBI Taxonomy" id="2902295"/>
    <lineage>
        <taxon>Bacteria</taxon>
        <taxon>Pseudomonadati</taxon>
        <taxon>Pseudomonadota</taxon>
        <taxon>Gammaproteobacteria</taxon>
        <taxon>Vibrionales</taxon>
        <taxon>Vibrionaceae</taxon>
        <taxon>Vibrio</taxon>
    </lineage>
</organism>
<gene>
    <name evidence="1" type="primary">nqrF</name>
    <name type="ordered locus">VIBHAR_03270</name>
</gene>